<gene>
    <name type="primary">RpLP2</name>
    <name type="synonym">rpA1</name>
    <name type="synonym">RpP1</name>
    <name type="ORF">CG4918</name>
</gene>
<organism>
    <name type="scientific">Drosophila melanogaster</name>
    <name type="common">Fruit fly</name>
    <dbReference type="NCBI Taxonomy" id="7227"/>
    <lineage>
        <taxon>Eukaryota</taxon>
        <taxon>Metazoa</taxon>
        <taxon>Ecdysozoa</taxon>
        <taxon>Arthropoda</taxon>
        <taxon>Hexapoda</taxon>
        <taxon>Insecta</taxon>
        <taxon>Pterygota</taxon>
        <taxon>Neoptera</taxon>
        <taxon>Endopterygota</taxon>
        <taxon>Diptera</taxon>
        <taxon>Brachycera</taxon>
        <taxon>Muscomorpha</taxon>
        <taxon>Ephydroidea</taxon>
        <taxon>Drosophilidae</taxon>
        <taxon>Drosophila</taxon>
        <taxon>Sophophora</taxon>
    </lineage>
</organism>
<feature type="chain" id="PRO_0000157652" description="Large ribosomal subunit protein P2">
    <location>
        <begin position="1"/>
        <end position="113"/>
    </location>
</feature>
<feature type="region of interest" description="Disordered" evidence="1">
    <location>
        <begin position="66"/>
        <end position="113"/>
    </location>
</feature>
<feature type="compositionally biased region" description="Low complexity" evidence="1">
    <location>
        <begin position="73"/>
        <end position="85"/>
    </location>
</feature>
<feature type="compositionally biased region" description="Basic and acidic residues" evidence="1">
    <location>
        <begin position="86"/>
        <end position="99"/>
    </location>
</feature>
<feature type="modified residue" description="Phosphoserine" evidence="2">
    <location>
        <position position="100"/>
    </location>
</feature>
<feature type="modified residue" description="Phosphoserine" evidence="2">
    <location>
        <position position="102"/>
    </location>
</feature>
<feature type="sequence conflict" description="In Ref. 1; CAA29026 and 4; AAM51113." evidence="3" ref="1 4">
    <original>S</original>
    <variation>G</variation>
    <location>
        <position position="21"/>
    </location>
</feature>
<feature type="sequence conflict" description="In Ref. 4; AAM51113." evidence="3" ref="4">
    <original>A</original>
    <variation>V</variation>
    <location>
        <position position="76"/>
    </location>
</feature>
<dbReference type="EMBL" id="X05016">
    <property type="protein sequence ID" value="CAA28672.1"/>
    <property type="molecule type" value="Genomic_DNA"/>
</dbReference>
<dbReference type="EMBL" id="X05466">
    <property type="protein sequence ID" value="CAA29026.1"/>
    <property type="molecule type" value="mRNA"/>
</dbReference>
<dbReference type="EMBL" id="AE013599">
    <property type="protein sequence ID" value="AAF57979.1"/>
    <property type="molecule type" value="Genomic_DNA"/>
</dbReference>
<dbReference type="EMBL" id="AY119253">
    <property type="protein sequence ID" value="AAM51113.1"/>
    <property type="molecule type" value="mRNA"/>
</dbReference>
<dbReference type="PIR" id="A26401">
    <property type="entry name" value="R6FFP2"/>
</dbReference>
<dbReference type="RefSeq" id="NP_523764.1">
    <property type="nucleotide sequence ID" value="NM_079040.4"/>
</dbReference>
<dbReference type="SMR" id="P05389"/>
<dbReference type="BioGRID" id="62568">
    <property type="interactions" value="117"/>
</dbReference>
<dbReference type="DIP" id="DIP-19859N"/>
<dbReference type="FunCoup" id="P05389">
    <property type="interactions" value="1172"/>
</dbReference>
<dbReference type="IntAct" id="P05389">
    <property type="interactions" value="15"/>
</dbReference>
<dbReference type="STRING" id="7227.FBpp0086252"/>
<dbReference type="iPTMnet" id="P05389"/>
<dbReference type="PaxDb" id="7227-FBpp0089424"/>
<dbReference type="DNASU" id="36855"/>
<dbReference type="EnsemblMetazoa" id="FBtr0087105">
    <property type="protein sequence ID" value="FBpp0086252"/>
    <property type="gene ID" value="FBgn0003274"/>
</dbReference>
<dbReference type="GeneID" id="36855"/>
<dbReference type="KEGG" id="dme:Dmel_CG4918"/>
<dbReference type="AGR" id="FB:FBgn0003274"/>
<dbReference type="CTD" id="6181"/>
<dbReference type="FlyBase" id="FBgn0003274">
    <property type="gene designation" value="RpLP2"/>
</dbReference>
<dbReference type="VEuPathDB" id="VectorBase:FBgn0003274"/>
<dbReference type="eggNOG" id="KOG3449">
    <property type="taxonomic scope" value="Eukaryota"/>
</dbReference>
<dbReference type="GeneTree" id="ENSGT00550000074828"/>
<dbReference type="HOGENOM" id="CLU_114656_0_2_1"/>
<dbReference type="InParanoid" id="P05389"/>
<dbReference type="OMA" id="DIMAQGI"/>
<dbReference type="OrthoDB" id="1227494at2759"/>
<dbReference type="PhylomeDB" id="P05389"/>
<dbReference type="Reactome" id="R-DME-156827">
    <property type="pathway name" value="L13a-mediated translational silencing of Ceruloplasmin expression"/>
</dbReference>
<dbReference type="Reactome" id="R-DME-1799339">
    <property type="pathway name" value="SRP-dependent cotranslational protein targeting to membrane"/>
</dbReference>
<dbReference type="Reactome" id="R-DME-72689">
    <property type="pathway name" value="Formation of a pool of free 40S subunits"/>
</dbReference>
<dbReference type="Reactome" id="R-DME-72706">
    <property type="pathway name" value="GTP hydrolysis and joining of the 60S ribosomal subunit"/>
</dbReference>
<dbReference type="Reactome" id="R-DME-975956">
    <property type="pathway name" value="Nonsense Mediated Decay (NMD) independent of the Exon Junction Complex (EJC)"/>
</dbReference>
<dbReference type="Reactome" id="R-DME-975957">
    <property type="pathway name" value="Nonsense Mediated Decay (NMD) enhanced by the Exon Junction Complex (EJC)"/>
</dbReference>
<dbReference type="SignaLink" id="P05389"/>
<dbReference type="BioGRID-ORCS" id="36855">
    <property type="hits" value="0 hits in 1 CRISPR screen"/>
</dbReference>
<dbReference type="ChiTaRS" id="RpLP2">
    <property type="organism name" value="fly"/>
</dbReference>
<dbReference type="GenomeRNAi" id="36855"/>
<dbReference type="PRO" id="PR:P05389"/>
<dbReference type="Proteomes" id="UP000000803">
    <property type="component" value="Chromosome 2R"/>
</dbReference>
<dbReference type="Bgee" id="FBgn0003274">
    <property type="expression patterns" value="Expressed in adult enteroendocrine precursor cell in adult midgut (Drosophila) and 293 other cell types or tissues"/>
</dbReference>
<dbReference type="ExpressionAtlas" id="P05389">
    <property type="expression patterns" value="baseline and differential"/>
</dbReference>
<dbReference type="GO" id="GO:0022625">
    <property type="term" value="C:cytosolic large ribosomal subunit"/>
    <property type="evidence" value="ECO:0000304"/>
    <property type="project" value="FlyBase"/>
</dbReference>
<dbReference type="GO" id="GO:0022626">
    <property type="term" value="C:cytosolic ribosome"/>
    <property type="evidence" value="ECO:0000314"/>
    <property type="project" value="FlyBase"/>
</dbReference>
<dbReference type="GO" id="GO:0003735">
    <property type="term" value="F:structural constituent of ribosome"/>
    <property type="evidence" value="ECO:0000314"/>
    <property type="project" value="FlyBase"/>
</dbReference>
<dbReference type="GO" id="GO:0002181">
    <property type="term" value="P:cytoplasmic translation"/>
    <property type="evidence" value="ECO:0000304"/>
    <property type="project" value="FlyBase"/>
</dbReference>
<dbReference type="GO" id="GO:0002182">
    <property type="term" value="P:cytoplasmic translational elongation"/>
    <property type="evidence" value="ECO:0007669"/>
    <property type="project" value="InterPro"/>
</dbReference>
<dbReference type="CDD" id="cd05833">
    <property type="entry name" value="Ribosomal_P2"/>
    <property type="match status" value="1"/>
</dbReference>
<dbReference type="FunFam" id="1.10.10.1410:FF:000002">
    <property type="entry name" value="60S acidic ribosomal protein P2"/>
    <property type="match status" value="1"/>
</dbReference>
<dbReference type="Gene3D" id="1.10.10.1410">
    <property type="match status" value="1"/>
</dbReference>
<dbReference type="HAMAP" id="MF_01478">
    <property type="entry name" value="Ribosomal_L12_arch"/>
    <property type="match status" value="1"/>
</dbReference>
<dbReference type="InterPro" id="IPR038716">
    <property type="entry name" value="P1/P2_N_sf"/>
</dbReference>
<dbReference type="InterPro" id="IPR027534">
    <property type="entry name" value="Ribosomal_P1/P2"/>
</dbReference>
<dbReference type="InterPro" id="IPR044076">
    <property type="entry name" value="Ribosomal_P2"/>
</dbReference>
<dbReference type="PANTHER" id="PTHR21141">
    <property type="entry name" value="60S ACIDIC RIBOSOMAL PROTEIN FAMILY MEMBER"/>
    <property type="match status" value="1"/>
</dbReference>
<dbReference type="PANTHER" id="PTHR21141:SF5">
    <property type="entry name" value="LARGE RIBOSOMAL SUBUNIT PROTEIN P2"/>
    <property type="match status" value="1"/>
</dbReference>
<dbReference type="Pfam" id="PF00428">
    <property type="entry name" value="Ribosomal_60s"/>
    <property type="match status" value="1"/>
</dbReference>
<sequence>MRYVAAYLLAVLGGKDSPANSDLEKILSSVGVEVDAERLTKVIKELAGKSIDDLIKEGREKLSSMPVGGGGAVAAADAAPAAAAGGDKKEAKKEEKKEESESEDDDMGFALFE</sequence>
<keyword id="KW-0597">Phosphoprotein</keyword>
<keyword id="KW-1185">Reference proteome</keyword>
<keyword id="KW-0687">Ribonucleoprotein</keyword>
<keyword id="KW-0689">Ribosomal protein</keyword>
<protein>
    <recommendedName>
        <fullName evidence="3">Large ribosomal subunit protein P2</fullName>
    </recommendedName>
    <alternativeName>
        <fullName>60S acidic ribosomal protein P2</fullName>
    </alternativeName>
    <alternativeName>
        <fullName>Acidic ribosomal protein RPA1</fullName>
    </alternativeName>
</protein>
<name>RLA2_DROME</name>
<accession>P05389</accession>
<accession>A4UZK7</accession>
<accession>Q8MRV1</accession>
<accession>Q9V7R6</accession>
<reference key="1">
    <citation type="journal article" date="1987" name="Nucleic Acids Res.">
        <title>Structural analysis of the Drosophila rpA1 gene, a member of the eucaryotic 'A' type ribosomal protein family.</title>
        <authorList>
            <person name="Qian S."/>
            <person name="Zhang J.-Y."/>
            <person name="Kay M.A."/>
            <person name="Jacobs-Lorena M."/>
        </authorList>
    </citation>
    <scope>NUCLEOTIDE SEQUENCE [GENOMIC DNA / MRNA]</scope>
    <source>
        <strain>Canton-S</strain>
        <strain>Oregon-R</strain>
    </source>
</reference>
<reference key="2">
    <citation type="journal article" date="2000" name="Science">
        <title>The genome sequence of Drosophila melanogaster.</title>
        <authorList>
            <person name="Adams M.D."/>
            <person name="Celniker S.E."/>
            <person name="Holt R.A."/>
            <person name="Evans C.A."/>
            <person name="Gocayne J.D."/>
            <person name="Amanatides P.G."/>
            <person name="Scherer S.E."/>
            <person name="Li P.W."/>
            <person name="Hoskins R.A."/>
            <person name="Galle R.F."/>
            <person name="George R.A."/>
            <person name="Lewis S.E."/>
            <person name="Richards S."/>
            <person name="Ashburner M."/>
            <person name="Henderson S.N."/>
            <person name="Sutton G.G."/>
            <person name="Wortman J.R."/>
            <person name="Yandell M.D."/>
            <person name="Zhang Q."/>
            <person name="Chen L.X."/>
            <person name="Brandon R.C."/>
            <person name="Rogers Y.-H.C."/>
            <person name="Blazej R.G."/>
            <person name="Champe M."/>
            <person name="Pfeiffer B.D."/>
            <person name="Wan K.H."/>
            <person name="Doyle C."/>
            <person name="Baxter E.G."/>
            <person name="Helt G."/>
            <person name="Nelson C.R."/>
            <person name="Miklos G.L.G."/>
            <person name="Abril J.F."/>
            <person name="Agbayani A."/>
            <person name="An H.-J."/>
            <person name="Andrews-Pfannkoch C."/>
            <person name="Baldwin D."/>
            <person name="Ballew R.M."/>
            <person name="Basu A."/>
            <person name="Baxendale J."/>
            <person name="Bayraktaroglu L."/>
            <person name="Beasley E.M."/>
            <person name="Beeson K.Y."/>
            <person name="Benos P.V."/>
            <person name="Berman B.P."/>
            <person name="Bhandari D."/>
            <person name="Bolshakov S."/>
            <person name="Borkova D."/>
            <person name="Botchan M.R."/>
            <person name="Bouck J."/>
            <person name="Brokstein P."/>
            <person name="Brottier P."/>
            <person name="Burtis K.C."/>
            <person name="Busam D.A."/>
            <person name="Butler H."/>
            <person name="Cadieu E."/>
            <person name="Center A."/>
            <person name="Chandra I."/>
            <person name="Cherry J.M."/>
            <person name="Cawley S."/>
            <person name="Dahlke C."/>
            <person name="Davenport L.B."/>
            <person name="Davies P."/>
            <person name="de Pablos B."/>
            <person name="Delcher A."/>
            <person name="Deng Z."/>
            <person name="Mays A.D."/>
            <person name="Dew I."/>
            <person name="Dietz S.M."/>
            <person name="Dodson K."/>
            <person name="Doup L.E."/>
            <person name="Downes M."/>
            <person name="Dugan-Rocha S."/>
            <person name="Dunkov B.C."/>
            <person name="Dunn P."/>
            <person name="Durbin K.J."/>
            <person name="Evangelista C.C."/>
            <person name="Ferraz C."/>
            <person name="Ferriera S."/>
            <person name="Fleischmann W."/>
            <person name="Fosler C."/>
            <person name="Gabrielian A.E."/>
            <person name="Garg N.S."/>
            <person name="Gelbart W.M."/>
            <person name="Glasser K."/>
            <person name="Glodek A."/>
            <person name="Gong F."/>
            <person name="Gorrell J.H."/>
            <person name="Gu Z."/>
            <person name="Guan P."/>
            <person name="Harris M."/>
            <person name="Harris N.L."/>
            <person name="Harvey D.A."/>
            <person name="Heiman T.J."/>
            <person name="Hernandez J.R."/>
            <person name="Houck J."/>
            <person name="Hostin D."/>
            <person name="Houston K.A."/>
            <person name="Howland T.J."/>
            <person name="Wei M.-H."/>
            <person name="Ibegwam C."/>
            <person name="Jalali M."/>
            <person name="Kalush F."/>
            <person name="Karpen G.H."/>
            <person name="Ke Z."/>
            <person name="Kennison J.A."/>
            <person name="Ketchum K.A."/>
            <person name="Kimmel B.E."/>
            <person name="Kodira C.D."/>
            <person name="Kraft C.L."/>
            <person name="Kravitz S."/>
            <person name="Kulp D."/>
            <person name="Lai Z."/>
            <person name="Lasko P."/>
            <person name="Lei Y."/>
            <person name="Levitsky A.A."/>
            <person name="Li J.H."/>
            <person name="Li Z."/>
            <person name="Liang Y."/>
            <person name="Lin X."/>
            <person name="Liu X."/>
            <person name="Mattei B."/>
            <person name="McIntosh T.C."/>
            <person name="McLeod M.P."/>
            <person name="McPherson D."/>
            <person name="Merkulov G."/>
            <person name="Milshina N.V."/>
            <person name="Mobarry C."/>
            <person name="Morris J."/>
            <person name="Moshrefi A."/>
            <person name="Mount S.M."/>
            <person name="Moy M."/>
            <person name="Murphy B."/>
            <person name="Murphy L."/>
            <person name="Muzny D.M."/>
            <person name="Nelson D.L."/>
            <person name="Nelson D.R."/>
            <person name="Nelson K.A."/>
            <person name="Nixon K."/>
            <person name="Nusskern D.R."/>
            <person name="Pacleb J.M."/>
            <person name="Palazzolo M."/>
            <person name="Pittman G.S."/>
            <person name="Pan S."/>
            <person name="Pollard J."/>
            <person name="Puri V."/>
            <person name="Reese M.G."/>
            <person name="Reinert K."/>
            <person name="Remington K."/>
            <person name="Saunders R.D.C."/>
            <person name="Scheeler F."/>
            <person name="Shen H."/>
            <person name="Shue B.C."/>
            <person name="Siden-Kiamos I."/>
            <person name="Simpson M."/>
            <person name="Skupski M.P."/>
            <person name="Smith T.J."/>
            <person name="Spier E."/>
            <person name="Spradling A.C."/>
            <person name="Stapleton M."/>
            <person name="Strong R."/>
            <person name="Sun E."/>
            <person name="Svirskas R."/>
            <person name="Tector C."/>
            <person name="Turner R."/>
            <person name="Venter E."/>
            <person name="Wang A.H."/>
            <person name="Wang X."/>
            <person name="Wang Z.-Y."/>
            <person name="Wassarman D.A."/>
            <person name="Weinstock G.M."/>
            <person name="Weissenbach J."/>
            <person name="Williams S.M."/>
            <person name="Woodage T."/>
            <person name="Worley K.C."/>
            <person name="Wu D."/>
            <person name="Yang S."/>
            <person name="Yao Q.A."/>
            <person name="Ye J."/>
            <person name="Yeh R.-F."/>
            <person name="Zaveri J.S."/>
            <person name="Zhan M."/>
            <person name="Zhang G."/>
            <person name="Zhao Q."/>
            <person name="Zheng L."/>
            <person name="Zheng X.H."/>
            <person name="Zhong F.N."/>
            <person name="Zhong W."/>
            <person name="Zhou X."/>
            <person name="Zhu S.C."/>
            <person name="Zhu X."/>
            <person name="Smith H.O."/>
            <person name="Gibbs R.A."/>
            <person name="Myers E.W."/>
            <person name="Rubin G.M."/>
            <person name="Venter J.C."/>
        </authorList>
    </citation>
    <scope>NUCLEOTIDE SEQUENCE [LARGE SCALE GENOMIC DNA]</scope>
    <source>
        <strain>Berkeley</strain>
    </source>
</reference>
<reference key="3">
    <citation type="journal article" date="2002" name="Genome Biol.">
        <title>Annotation of the Drosophila melanogaster euchromatic genome: a systematic review.</title>
        <authorList>
            <person name="Misra S."/>
            <person name="Crosby M.A."/>
            <person name="Mungall C.J."/>
            <person name="Matthews B.B."/>
            <person name="Campbell K.S."/>
            <person name="Hradecky P."/>
            <person name="Huang Y."/>
            <person name="Kaminker J.S."/>
            <person name="Millburn G.H."/>
            <person name="Prochnik S.E."/>
            <person name="Smith C.D."/>
            <person name="Tupy J.L."/>
            <person name="Whitfield E.J."/>
            <person name="Bayraktaroglu L."/>
            <person name="Berman B.P."/>
            <person name="Bettencourt B.R."/>
            <person name="Celniker S.E."/>
            <person name="de Grey A.D.N.J."/>
            <person name="Drysdale R.A."/>
            <person name="Harris N.L."/>
            <person name="Richter J."/>
            <person name="Russo S."/>
            <person name="Schroeder A.J."/>
            <person name="Shu S.Q."/>
            <person name="Stapleton M."/>
            <person name="Yamada C."/>
            <person name="Ashburner M."/>
            <person name="Gelbart W.M."/>
            <person name="Rubin G.M."/>
            <person name="Lewis S.E."/>
        </authorList>
    </citation>
    <scope>GENOME REANNOTATION</scope>
    <source>
        <strain>Berkeley</strain>
    </source>
</reference>
<reference key="4">
    <citation type="journal article" date="2002" name="Genome Biol.">
        <title>A Drosophila full-length cDNA resource.</title>
        <authorList>
            <person name="Stapleton M."/>
            <person name="Carlson J.W."/>
            <person name="Brokstein P."/>
            <person name="Yu C."/>
            <person name="Champe M."/>
            <person name="George R.A."/>
            <person name="Guarin H."/>
            <person name="Kronmiller B."/>
            <person name="Pacleb J.M."/>
            <person name="Park S."/>
            <person name="Wan K.H."/>
            <person name="Rubin G.M."/>
            <person name="Celniker S.E."/>
        </authorList>
    </citation>
    <scope>NUCLEOTIDE SEQUENCE [LARGE SCALE MRNA]</scope>
    <source>
        <strain>Berkeley</strain>
        <tissue>Embryo</tissue>
    </source>
</reference>
<reference key="5">
    <citation type="journal article" date="2008" name="J. Proteome Res.">
        <title>Phosphoproteome analysis of Drosophila melanogaster embryos.</title>
        <authorList>
            <person name="Zhai B."/>
            <person name="Villen J."/>
            <person name="Beausoleil S.A."/>
            <person name="Mintseris J."/>
            <person name="Gygi S.P."/>
        </authorList>
    </citation>
    <scope>PHOSPHORYLATION [LARGE SCALE ANALYSIS] AT SER-100 AND SER-102</scope>
    <scope>IDENTIFICATION BY MASS SPECTROMETRY</scope>
    <source>
        <tissue>Embryo</tissue>
    </source>
</reference>
<comment type="function">
    <text>Plays an important role in the elongation step of protein synthesis.</text>
</comment>
<comment type="subunit">
    <text>P1 and P2 exist as dimers at the large ribosomal subunit.</text>
</comment>
<comment type="similarity">
    <text evidence="3">Belongs to the eukaryotic ribosomal protein P1/P2 family.</text>
</comment>
<proteinExistence type="evidence at protein level"/>
<evidence type="ECO:0000256" key="1">
    <source>
        <dbReference type="SAM" id="MobiDB-lite"/>
    </source>
</evidence>
<evidence type="ECO:0000269" key="2">
    <source>
    </source>
</evidence>
<evidence type="ECO:0000305" key="3"/>